<organism>
    <name type="scientific">Acidothermus cellulolyticus (strain ATCC 43068 / DSM 8971 / 11B)</name>
    <dbReference type="NCBI Taxonomy" id="351607"/>
    <lineage>
        <taxon>Bacteria</taxon>
        <taxon>Bacillati</taxon>
        <taxon>Actinomycetota</taxon>
        <taxon>Actinomycetes</taxon>
        <taxon>Acidothermales</taxon>
        <taxon>Acidothermaceae</taxon>
        <taxon>Acidothermus</taxon>
    </lineage>
</organism>
<reference key="1">
    <citation type="journal article" date="2009" name="Genome Res.">
        <title>Complete genome of the cellulolytic thermophile Acidothermus cellulolyticus 11B provides insights into its ecophysiological and evolutionary adaptations.</title>
        <authorList>
            <person name="Barabote R.D."/>
            <person name="Xie G."/>
            <person name="Leu D.H."/>
            <person name="Normand P."/>
            <person name="Necsulea A."/>
            <person name="Daubin V."/>
            <person name="Medigue C."/>
            <person name="Adney W.S."/>
            <person name="Xu X.C."/>
            <person name="Lapidus A."/>
            <person name="Parales R.E."/>
            <person name="Detter C."/>
            <person name="Pujic P."/>
            <person name="Bruce D."/>
            <person name="Lavire C."/>
            <person name="Challacombe J.F."/>
            <person name="Brettin T.S."/>
            <person name="Berry A.M."/>
        </authorList>
    </citation>
    <scope>NUCLEOTIDE SEQUENCE [LARGE SCALE GENOMIC DNA]</scope>
    <source>
        <strain>ATCC 43068 / DSM 8971 / 11B</strain>
    </source>
</reference>
<comment type="function">
    <text evidence="1">Catalyzes the ATP-dependent amination of UTP to CTP with either L-glutamine or ammonia as the source of nitrogen. Regulates intracellular CTP levels through interactions with the four ribonucleotide triphosphates.</text>
</comment>
<comment type="catalytic activity">
    <reaction evidence="1">
        <text>UTP + L-glutamine + ATP + H2O = CTP + L-glutamate + ADP + phosphate + 2 H(+)</text>
        <dbReference type="Rhea" id="RHEA:26426"/>
        <dbReference type="ChEBI" id="CHEBI:15377"/>
        <dbReference type="ChEBI" id="CHEBI:15378"/>
        <dbReference type="ChEBI" id="CHEBI:29985"/>
        <dbReference type="ChEBI" id="CHEBI:30616"/>
        <dbReference type="ChEBI" id="CHEBI:37563"/>
        <dbReference type="ChEBI" id="CHEBI:43474"/>
        <dbReference type="ChEBI" id="CHEBI:46398"/>
        <dbReference type="ChEBI" id="CHEBI:58359"/>
        <dbReference type="ChEBI" id="CHEBI:456216"/>
        <dbReference type="EC" id="6.3.4.2"/>
    </reaction>
</comment>
<comment type="catalytic activity">
    <reaction evidence="1">
        <text>L-glutamine + H2O = L-glutamate + NH4(+)</text>
        <dbReference type="Rhea" id="RHEA:15889"/>
        <dbReference type="ChEBI" id="CHEBI:15377"/>
        <dbReference type="ChEBI" id="CHEBI:28938"/>
        <dbReference type="ChEBI" id="CHEBI:29985"/>
        <dbReference type="ChEBI" id="CHEBI:58359"/>
    </reaction>
</comment>
<comment type="catalytic activity">
    <reaction evidence="1">
        <text>UTP + NH4(+) + ATP = CTP + ADP + phosphate + 2 H(+)</text>
        <dbReference type="Rhea" id="RHEA:16597"/>
        <dbReference type="ChEBI" id="CHEBI:15378"/>
        <dbReference type="ChEBI" id="CHEBI:28938"/>
        <dbReference type="ChEBI" id="CHEBI:30616"/>
        <dbReference type="ChEBI" id="CHEBI:37563"/>
        <dbReference type="ChEBI" id="CHEBI:43474"/>
        <dbReference type="ChEBI" id="CHEBI:46398"/>
        <dbReference type="ChEBI" id="CHEBI:456216"/>
    </reaction>
</comment>
<comment type="activity regulation">
    <text evidence="1">Allosterically activated by GTP, when glutamine is the substrate; GTP has no effect on the reaction when ammonia is the substrate. The allosteric effector GTP functions by stabilizing the protein conformation that binds the tetrahedral intermediate(s) formed during glutamine hydrolysis. Inhibited by the product CTP, via allosteric rather than competitive inhibition.</text>
</comment>
<comment type="pathway">
    <text evidence="1">Pyrimidine metabolism; CTP biosynthesis via de novo pathway; CTP from UDP: step 2/2.</text>
</comment>
<comment type="subunit">
    <text evidence="1">Homotetramer.</text>
</comment>
<comment type="miscellaneous">
    <text evidence="1">CTPSs have evolved a hybrid strategy for distinguishing between UTP and CTP. The overlapping regions of the product feedback inhibitory and substrate sites recognize a common feature in both compounds, the triphosphate moiety. To differentiate isosteric substrate and product pyrimidine rings, an additional pocket far from the expected kinase/ligase catalytic site, specifically recognizes the cytosine and ribose portions of the product inhibitor.</text>
</comment>
<comment type="similarity">
    <text evidence="1">Belongs to the CTP synthase family.</text>
</comment>
<accession>A0LUA5</accession>
<name>PYRG_ACIC1</name>
<evidence type="ECO:0000255" key="1">
    <source>
        <dbReference type="HAMAP-Rule" id="MF_01227"/>
    </source>
</evidence>
<gene>
    <name evidence="1" type="primary">pyrG</name>
    <name type="ordered locus">Acel_1243</name>
</gene>
<dbReference type="EC" id="6.3.4.2" evidence="1"/>
<dbReference type="EMBL" id="CP000481">
    <property type="protein sequence ID" value="ABK53015.1"/>
    <property type="molecule type" value="Genomic_DNA"/>
</dbReference>
<dbReference type="RefSeq" id="WP_011720078.1">
    <property type="nucleotide sequence ID" value="NC_008578.1"/>
</dbReference>
<dbReference type="SMR" id="A0LUA5"/>
<dbReference type="FunCoup" id="A0LUA5">
    <property type="interactions" value="340"/>
</dbReference>
<dbReference type="STRING" id="351607.Acel_1243"/>
<dbReference type="KEGG" id="ace:Acel_1243"/>
<dbReference type="eggNOG" id="COG0504">
    <property type="taxonomic scope" value="Bacteria"/>
</dbReference>
<dbReference type="HOGENOM" id="CLU_011675_5_0_11"/>
<dbReference type="InParanoid" id="A0LUA5"/>
<dbReference type="OrthoDB" id="9801107at2"/>
<dbReference type="UniPathway" id="UPA00159">
    <property type="reaction ID" value="UER00277"/>
</dbReference>
<dbReference type="Proteomes" id="UP000008221">
    <property type="component" value="Chromosome"/>
</dbReference>
<dbReference type="GO" id="GO:0005829">
    <property type="term" value="C:cytosol"/>
    <property type="evidence" value="ECO:0007669"/>
    <property type="project" value="TreeGrafter"/>
</dbReference>
<dbReference type="GO" id="GO:0005524">
    <property type="term" value="F:ATP binding"/>
    <property type="evidence" value="ECO:0007669"/>
    <property type="project" value="UniProtKB-KW"/>
</dbReference>
<dbReference type="GO" id="GO:0003883">
    <property type="term" value="F:CTP synthase activity"/>
    <property type="evidence" value="ECO:0007669"/>
    <property type="project" value="UniProtKB-UniRule"/>
</dbReference>
<dbReference type="GO" id="GO:0004359">
    <property type="term" value="F:glutaminase activity"/>
    <property type="evidence" value="ECO:0007669"/>
    <property type="project" value="RHEA"/>
</dbReference>
<dbReference type="GO" id="GO:0042802">
    <property type="term" value="F:identical protein binding"/>
    <property type="evidence" value="ECO:0007669"/>
    <property type="project" value="TreeGrafter"/>
</dbReference>
<dbReference type="GO" id="GO:0046872">
    <property type="term" value="F:metal ion binding"/>
    <property type="evidence" value="ECO:0007669"/>
    <property type="project" value="UniProtKB-KW"/>
</dbReference>
<dbReference type="GO" id="GO:0044210">
    <property type="term" value="P:'de novo' CTP biosynthetic process"/>
    <property type="evidence" value="ECO:0007669"/>
    <property type="project" value="UniProtKB-UniRule"/>
</dbReference>
<dbReference type="GO" id="GO:0019856">
    <property type="term" value="P:pyrimidine nucleobase biosynthetic process"/>
    <property type="evidence" value="ECO:0007669"/>
    <property type="project" value="TreeGrafter"/>
</dbReference>
<dbReference type="CDD" id="cd03113">
    <property type="entry name" value="CTPS_N"/>
    <property type="match status" value="1"/>
</dbReference>
<dbReference type="CDD" id="cd01746">
    <property type="entry name" value="GATase1_CTP_Synthase"/>
    <property type="match status" value="1"/>
</dbReference>
<dbReference type="FunFam" id="3.40.50.300:FF:000009">
    <property type="entry name" value="CTP synthase"/>
    <property type="match status" value="1"/>
</dbReference>
<dbReference type="FunFam" id="3.40.50.880:FF:000002">
    <property type="entry name" value="CTP synthase"/>
    <property type="match status" value="1"/>
</dbReference>
<dbReference type="Gene3D" id="3.40.50.880">
    <property type="match status" value="1"/>
</dbReference>
<dbReference type="Gene3D" id="3.40.50.300">
    <property type="entry name" value="P-loop containing nucleotide triphosphate hydrolases"/>
    <property type="match status" value="1"/>
</dbReference>
<dbReference type="HAMAP" id="MF_01227">
    <property type="entry name" value="PyrG"/>
    <property type="match status" value="1"/>
</dbReference>
<dbReference type="InterPro" id="IPR029062">
    <property type="entry name" value="Class_I_gatase-like"/>
</dbReference>
<dbReference type="InterPro" id="IPR004468">
    <property type="entry name" value="CTP_synthase"/>
</dbReference>
<dbReference type="InterPro" id="IPR017456">
    <property type="entry name" value="CTP_synthase_N"/>
</dbReference>
<dbReference type="InterPro" id="IPR017926">
    <property type="entry name" value="GATASE"/>
</dbReference>
<dbReference type="InterPro" id="IPR033828">
    <property type="entry name" value="GATase1_CTP_Synthase"/>
</dbReference>
<dbReference type="InterPro" id="IPR027417">
    <property type="entry name" value="P-loop_NTPase"/>
</dbReference>
<dbReference type="NCBIfam" id="NF003792">
    <property type="entry name" value="PRK05380.1"/>
    <property type="match status" value="1"/>
</dbReference>
<dbReference type="NCBIfam" id="TIGR00337">
    <property type="entry name" value="PyrG"/>
    <property type="match status" value="1"/>
</dbReference>
<dbReference type="PANTHER" id="PTHR11550">
    <property type="entry name" value="CTP SYNTHASE"/>
    <property type="match status" value="1"/>
</dbReference>
<dbReference type="PANTHER" id="PTHR11550:SF0">
    <property type="entry name" value="CTP SYNTHASE-RELATED"/>
    <property type="match status" value="1"/>
</dbReference>
<dbReference type="Pfam" id="PF06418">
    <property type="entry name" value="CTP_synth_N"/>
    <property type="match status" value="1"/>
</dbReference>
<dbReference type="Pfam" id="PF00117">
    <property type="entry name" value="GATase"/>
    <property type="match status" value="1"/>
</dbReference>
<dbReference type="SUPFAM" id="SSF52317">
    <property type="entry name" value="Class I glutamine amidotransferase-like"/>
    <property type="match status" value="1"/>
</dbReference>
<dbReference type="SUPFAM" id="SSF52540">
    <property type="entry name" value="P-loop containing nucleoside triphosphate hydrolases"/>
    <property type="match status" value="1"/>
</dbReference>
<dbReference type="PROSITE" id="PS51273">
    <property type="entry name" value="GATASE_TYPE_1"/>
    <property type="match status" value="1"/>
</dbReference>
<sequence>MAARQQTKHLFVTGGVASSLGKGLTASSLGNLLKARGLRVTMQKLDPYLNVDPGTMNPFQHGEVFVTDDGAETDLDIGHYERFLDTDLNGSANVTTGQIYSSVIAKERRGEYLGDTVQVIPHITNEIKDRIRGMAGRDVDVVITEIGGTVGDIESLPFLEAARQIRHEVGRDNVFFLHVSLLPYIGPSGELKTKPTQHSVAALRQVGITPDAIVCRADRPIPPNVKKKVSLMCDVDEEAVISAVDAPSIYDIPKVLHAEGLDAYVVRRLGLPFRDVDWTQWDELLRRVHDPANRVTIALVGKYVDLPDAYLSVIEALRAGGIANDAGVDVRWVASDTCETPGGAAKALQNVDGVVVPGGFGVRGIEGKLGALRYTRENGIPTLGLCLGLQCMVVEFARNVIGLAGANSTEFDPATPYPVIATMADQMEVVAGRRDMGGTMRLGSYPAILAPETLVHELYGCLEVRERHRHRYEVNNAYRQQLEAAGLVISGTSPDGQLVEFVELPRSVHPFYVATQAHPELRSRPTRPHPLFTGLIRAALLHRCPPIPLDTEPVPTAR</sequence>
<proteinExistence type="inferred from homology"/>
<protein>
    <recommendedName>
        <fullName evidence="1">CTP synthase</fullName>
        <ecNumber evidence="1">6.3.4.2</ecNumber>
    </recommendedName>
    <alternativeName>
        <fullName evidence="1">Cytidine 5'-triphosphate synthase</fullName>
    </alternativeName>
    <alternativeName>
        <fullName evidence="1">Cytidine triphosphate synthetase</fullName>
        <shortName evidence="1">CTP synthetase</shortName>
        <shortName evidence="1">CTPS</shortName>
    </alternativeName>
    <alternativeName>
        <fullName evidence="1">UTP--ammonia ligase</fullName>
    </alternativeName>
</protein>
<keyword id="KW-0067">ATP-binding</keyword>
<keyword id="KW-0315">Glutamine amidotransferase</keyword>
<keyword id="KW-0436">Ligase</keyword>
<keyword id="KW-0460">Magnesium</keyword>
<keyword id="KW-0479">Metal-binding</keyword>
<keyword id="KW-0547">Nucleotide-binding</keyword>
<keyword id="KW-0665">Pyrimidine biosynthesis</keyword>
<keyword id="KW-1185">Reference proteome</keyword>
<feature type="chain" id="PRO_1000139361" description="CTP synthase">
    <location>
        <begin position="1"/>
        <end position="558"/>
    </location>
</feature>
<feature type="domain" description="Glutamine amidotransferase type-1" evidence="1">
    <location>
        <begin position="296"/>
        <end position="545"/>
    </location>
</feature>
<feature type="region of interest" description="Amidoligase domain" evidence="1">
    <location>
        <begin position="1"/>
        <end position="271"/>
    </location>
</feature>
<feature type="active site" description="Nucleophile; for glutamine hydrolysis" evidence="1">
    <location>
        <position position="386"/>
    </location>
</feature>
<feature type="active site" evidence="1">
    <location>
        <position position="518"/>
    </location>
</feature>
<feature type="active site" evidence="1">
    <location>
        <position position="520"/>
    </location>
</feature>
<feature type="binding site" evidence="1">
    <location>
        <position position="18"/>
    </location>
    <ligand>
        <name>CTP</name>
        <dbReference type="ChEBI" id="CHEBI:37563"/>
        <note>allosteric inhibitor</note>
    </ligand>
</feature>
<feature type="binding site" evidence="1">
    <location>
        <position position="18"/>
    </location>
    <ligand>
        <name>UTP</name>
        <dbReference type="ChEBI" id="CHEBI:46398"/>
    </ligand>
</feature>
<feature type="binding site" evidence="1">
    <location>
        <begin position="19"/>
        <end position="24"/>
    </location>
    <ligand>
        <name>ATP</name>
        <dbReference type="ChEBI" id="CHEBI:30616"/>
    </ligand>
</feature>
<feature type="binding site" evidence="1">
    <location>
        <position position="76"/>
    </location>
    <ligand>
        <name>ATP</name>
        <dbReference type="ChEBI" id="CHEBI:30616"/>
    </ligand>
</feature>
<feature type="binding site" evidence="1">
    <location>
        <position position="76"/>
    </location>
    <ligand>
        <name>Mg(2+)</name>
        <dbReference type="ChEBI" id="CHEBI:18420"/>
    </ligand>
</feature>
<feature type="binding site" evidence="1">
    <location>
        <position position="145"/>
    </location>
    <ligand>
        <name>Mg(2+)</name>
        <dbReference type="ChEBI" id="CHEBI:18420"/>
    </ligand>
</feature>
<feature type="binding site" evidence="1">
    <location>
        <begin position="152"/>
        <end position="154"/>
    </location>
    <ligand>
        <name>CTP</name>
        <dbReference type="ChEBI" id="CHEBI:37563"/>
        <note>allosteric inhibitor</note>
    </ligand>
</feature>
<feature type="binding site" evidence="1">
    <location>
        <begin position="192"/>
        <end position="197"/>
    </location>
    <ligand>
        <name>CTP</name>
        <dbReference type="ChEBI" id="CHEBI:37563"/>
        <note>allosteric inhibitor</note>
    </ligand>
</feature>
<feature type="binding site" evidence="1">
    <location>
        <begin position="192"/>
        <end position="197"/>
    </location>
    <ligand>
        <name>UTP</name>
        <dbReference type="ChEBI" id="CHEBI:46398"/>
    </ligand>
</feature>
<feature type="binding site" evidence="1">
    <location>
        <position position="228"/>
    </location>
    <ligand>
        <name>CTP</name>
        <dbReference type="ChEBI" id="CHEBI:37563"/>
        <note>allosteric inhibitor</note>
    </ligand>
</feature>
<feature type="binding site" evidence="1">
    <location>
        <position position="228"/>
    </location>
    <ligand>
        <name>UTP</name>
        <dbReference type="ChEBI" id="CHEBI:46398"/>
    </ligand>
</feature>
<feature type="binding site" evidence="1">
    <location>
        <position position="359"/>
    </location>
    <ligand>
        <name>L-glutamine</name>
        <dbReference type="ChEBI" id="CHEBI:58359"/>
    </ligand>
</feature>
<feature type="binding site" evidence="1">
    <location>
        <begin position="387"/>
        <end position="390"/>
    </location>
    <ligand>
        <name>L-glutamine</name>
        <dbReference type="ChEBI" id="CHEBI:58359"/>
    </ligand>
</feature>
<feature type="binding site" evidence="1">
    <location>
        <position position="410"/>
    </location>
    <ligand>
        <name>L-glutamine</name>
        <dbReference type="ChEBI" id="CHEBI:58359"/>
    </ligand>
</feature>
<feature type="binding site" evidence="1">
    <location>
        <position position="471"/>
    </location>
    <ligand>
        <name>L-glutamine</name>
        <dbReference type="ChEBI" id="CHEBI:58359"/>
    </ligand>
</feature>